<sequence length="91" mass="10229">MNETEATLPVFTLEQVAEHHSPDDCWMAIHGKVYDLTPYVPNHPGPAGMMLVWCGQESTEAWETKSYGEPHSSLAARLLQRYLIGTLEEIT</sequence>
<protein>
    <recommendedName>
        <fullName>Soluble cytochrome b558</fullName>
    </recommendedName>
</protein>
<dbReference type="EMBL" id="AF183259">
    <property type="protein sequence ID" value="AAD56233.1"/>
    <property type="molecule type" value="Genomic_DNA"/>
</dbReference>
<dbReference type="PDB" id="1CXY">
    <property type="method" value="X-ray"/>
    <property type="resolution" value="1.65 A"/>
    <property type="chains" value="A=2-91"/>
</dbReference>
<dbReference type="PDBsum" id="1CXY"/>
<dbReference type="SMR" id="P82291"/>
<dbReference type="EvolutionaryTrace" id="P82291"/>
<dbReference type="GO" id="GO:0043231">
    <property type="term" value="C:intracellular membrane-bounded organelle"/>
    <property type="evidence" value="ECO:0007669"/>
    <property type="project" value="TreeGrafter"/>
</dbReference>
<dbReference type="GO" id="GO:0016020">
    <property type="term" value="C:membrane"/>
    <property type="evidence" value="ECO:0007669"/>
    <property type="project" value="TreeGrafter"/>
</dbReference>
<dbReference type="GO" id="GO:0020037">
    <property type="term" value="F:heme binding"/>
    <property type="evidence" value="ECO:0007669"/>
    <property type="project" value="TreeGrafter"/>
</dbReference>
<dbReference type="GO" id="GO:0046872">
    <property type="term" value="F:metal ion binding"/>
    <property type="evidence" value="ECO:0007669"/>
    <property type="project" value="UniProtKB-KW"/>
</dbReference>
<dbReference type="Gene3D" id="3.10.120.10">
    <property type="entry name" value="Cytochrome b5-like heme/steroid binding domain"/>
    <property type="match status" value="1"/>
</dbReference>
<dbReference type="InterPro" id="IPR001199">
    <property type="entry name" value="Cyt_B5-like_heme/steroid-bd"/>
</dbReference>
<dbReference type="InterPro" id="IPR036400">
    <property type="entry name" value="Cyt_B5-like_heme/steroid_sf"/>
</dbReference>
<dbReference type="InterPro" id="IPR050668">
    <property type="entry name" value="Cytochrome_b5"/>
</dbReference>
<dbReference type="PANTHER" id="PTHR19359">
    <property type="entry name" value="CYTOCHROME B5"/>
    <property type="match status" value="1"/>
</dbReference>
<dbReference type="PANTHER" id="PTHR19359:SF95">
    <property type="entry name" value="CYTOCHROME B5 TYPE B"/>
    <property type="match status" value="1"/>
</dbReference>
<dbReference type="Pfam" id="PF00173">
    <property type="entry name" value="Cyt-b5"/>
    <property type="match status" value="1"/>
</dbReference>
<dbReference type="SMART" id="SM01117">
    <property type="entry name" value="Cyt-b5"/>
    <property type="match status" value="1"/>
</dbReference>
<dbReference type="SUPFAM" id="SSF55856">
    <property type="entry name" value="Cytochrome b5-like heme/steroid binding domain"/>
    <property type="match status" value="1"/>
</dbReference>
<dbReference type="PROSITE" id="PS50255">
    <property type="entry name" value="CYTOCHROME_B5_2"/>
    <property type="match status" value="1"/>
</dbReference>
<proteinExistence type="evidence at protein level"/>
<reference key="1">
    <citation type="journal article" date="1999" name="J. Biol. Chem.">
        <title>Structure and characterization of Ectothiorhodospira vacuolata cytochrome b(558), a prokaryotic homologue of cytochrome b(5).</title>
        <authorList>
            <person name="Kostanjevecki V."/>
            <person name="Leys D."/>
            <person name="Van Driessche G."/>
            <person name="Meyer T.E."/>
            <person name="Cusanovich M.A."/>
            <person name="Fischer U."/>
            <person name="Guisez Y."/>
            <person name="Van Beeumen J."/>
        </authorList>
    </citation>
    <scope>NUCLEOTIDE SEQUENCE [GENOMIC DNA]</scope>
    <scope>PROTEIN SEQUENCE OF 2-91</scope>
    <scope>X-RAY CRYSTALLOGRAPHY (1.65 ANGSTROMS)</scope>
    <scope>DISULFIDE BOND</scope>
    <scope>MASS SPECTROMETRY</scope>
</reference>
<evidence type="ECO:0000255" key="1">
    <source>
        <dbReference type="PROSITE-ProRule" id="PRU00279"/>
    </source>
</evidence>
<evidence type="ECO:0000269" key="2">
    <source>
    </source>
</evidence>
<evidence type="ECO:0000305" key="3"/>
<evidence type="ECO:0007829" key="4">
    <source>
        <dbReference type="PDB" id="1CXY"/>
    </source>
</evidence>
<keyword id="KW-0002">3D-structure</keyword>
<keyword id="KW-0903">Direct protein sequencing</keyword>
<keyword id="KW-1015">Disulfide bond</keyword>
<keyword id="KW-0249">Electron transport</keyword>
<keyword id="KW-0349">Heme</keyword>
<keyword id="KW-0408">Iron</keyword>
<keyword id="KW-0479">Metal-binding</keyword>
<keyword id="KW-0813">Transport</keyword>
<organism>
    <name type="scientific">Ectothiorhodospira shaposhnikovii</name>
    <name type="common">Ectothiorhodospira vacuolata</name>
    <dbReference type="NCBI Taxonomy" id="1054"/>
    <lineage>
        <taxon>Bacteria</taxon>
        <taxon>Pseudomonadati</taxon>
        <taxon>Pseudomonadota</taxon>
        <taxon>Gammaproteobacteria</taxon>
        <taxon>Chromatiales</taxon>
        <taxon>Ectothiorhodospiraceae</taxon>
        <taxon>Ectothiorhodospira</taxon>
    </lineage>
</organism>
<accession>P82291</accession>
<comment type="mass spectrometry" mass="10094.7" method="Electrospray" evidence="2"/>
<comment type="similarity">
    <text evidence="3">Belongs to the cytochrome b5 family.</text>
</comment>
<name>CYB5_ECTSH</name>
<feature type="initiator methionine" description="Removed" evidence="2">
    <location>
        <position position="1"/>
    </location>
</feature>
<feature type="chain" id="PRO_0000166037" description="Soluble cytochrome b558">
    <location>
        <begin position="2"/>
        <end position="91"/>
    </location>
</feature>
<feature type="domain" description="Cytochrome b5 heme-binding" evidence="1">
    <location>
        <begin position="8"/>
        <end position="88"/>
    </location>
</feature>
<feature type="binding site" description="axial binding residue">
    <location>
        <position position="43"/>
    </location>
    <ligand>
        <name>heme</name>
        <dbReference type="ChEBI" id="CHEBI:30413"/>
    </ligand>
    <ligandPart>
        <name>Fe</name>
        <dbReference type="ChEBI" id="CHEBI:18248"/>
    </ligandPart>
</feature>
<feature type="binding site" description="axial binding residue">
    <location>
        <position position="71"/>
    </location>
    <ligand>
        <name>heme</name>
        <dbReference type="ChEBI" id="CHEBI:30413"/>
    </ligand>
    <ligandPart>
        <name>Fe</name>
        <dbReference type="ChEBI" id="CHEBI:18248"/>
    </ligandPart>
</feature>
<feature type="disulfide bond" evidence="2">
    <location>
        <begin position="25"/>
        <end position="54"/>
    </location>
</feature>
<feature type="helix" evidence="4">
    <location>
        <begin position="13"/>
        <end position="16"/>
    </location>
</feature>
<feature type="strand" evidence="4">
    <location>
        <begin position="24"/>
        <end position="29"/>
    </location>
</feature>
<feature type="strand" evidence="4">
    <location>
        <begin position="32"/>
        <end position="35"/>
    </location>
</feature>
<feature type="turn" evidence="4">
    <location>
        <begin position="37"/>
        <end position="39"/>
    </location>
</feature>
<feature type="helix" evidence="4">
    <location>
        <begin position="40"/>
        <end position="42"/>
    </location>
</feature>
<feature type="turn" evidence="4">
    <location>
        <begin position="47"/>
        <end position="50"/>
    </location>
</feature>
<feature type="helix" evidence="4">
    <location>
        <begin position="51"/>
        <end position="53"/>
    </location>
</feature>
<feature type="helix" evidence="4">
    <location>
        <begin position="59"/>
        <end position="64"/>
    </location>
</feature>
<feature type="turn" evidence="4">
    <location>
        <begin position="65"/>
        <end position="68"/>
    </location>
</feature>
<feature type="helix" evidence="4">
    <location>
        <begin position="73"/>
        <end position="81"/>
    </location>
</feature>
<feature type="strand" evidence="4">
    <location>
        <begin position="83"/>
        <end position="86"/>
    </location>
</feature>